<gene>
    <name evidence="1" type="primary">nuoI</name>
    <name type="ordered locus">amb2779</name>
</gene>
<sequence length="162" mass="18554">MSFLDRTARAFLLTELVQGLALTLRYMFKPKVTINYPYEKGPLSVRFRGEHALRRYPNGEERCIACKLCEAICPAQAITIEPEPRDDGSRRARRYDLDMTKCIYCGLCQEACPVDAIVEGPNFEYATETRAELMYNKSKLLANGDRWEAELAFRIAADAPYR</sequence>
<feature type="chain" id="PRO_0000250914" description="NADH-quinone oxidoreductase subunit I">
    <location>
        <begin position="1"/>
        <end position="162"/>
    </location>
</feature>
<feature type="domain" description="4Fe-4S ferredoxin-type 1" evidence="1">
    <location>
        <begin position="53"/>
        <end position="83"/>
    </location>
</feature>
<feature type="domain" description="4Fe-4S ferredoxin-type 2" evidence="1">
    <location>
        <begin position="93"/>
        <end position="122"/>
    </location>
</feature>
<feature type="binding site" evidence="1">
    <location>
        <position position="63"/>
    </location>
    <ligand>
        <name>[4Fe-4S] cluster</name>
        <dbReference type="ChEBI" id="CHEBI:49883"/>
        <label>1</label>
    </ligand>
</feature>
<feature type="binding site" evidence="1">
    <location>
        <position position="66"/>
    </location>
    <ligand>
        <name>[4Fe-4S] cluster</name>
        <dbReference type="ChEBI" id="CHEBI:49883"/>
        <label>1</label>
    </ligand>
</feature>
<feature type="binding site" evidence="1">
    <location>
        <position position="69"/>
    </location>
    <ligand>
        <name>[4Fe-4S] cluster</name>
        <dbReference type="ChEBI" id="CHEBI:49883"/>
        <label>1</label>
    </ligand>
</feature>
<feature type="binding site" evidence="1">
    <location>
        <position position="73"/>
    </location>
    <ligand>
        <name>[4Fe-4S] cluster</name>
        <dbReference type="ChEBI" id="CHEBI:49883"/>
        <label>2</label>
    </ligand>
</feature>
<feature type="binding site" evidence="1">
    <location>
        <position position="102"/>
    </location>
    <ligand>
        <name>[4Fe-4S] cluster</name>
        <dbReference type="ChEBI" id="CHEBI:49883"/>
        <label>2</label>
    </ligand>
</feature>
<feature type="binding site" evidence="1">
    <location>
        <position position="105"/>
    </location>
    <ligand>
        <name>[4Fe-4S] cluster</name>
        <dbReference type="ChEBI" id="CHEBI:49883"/>
        <label>2</label>
    </ligand>
</feature>
<feature type="binding site" evidence="1">
    <location>
        <position position="108"/>
    </location>
    <ligand>
        <name>[4Fe-4S] cluster</name>
        <dbReference type="ChEBI" id="CHEBI:49883"/>
        <label>2</label>
    </ligand>
</feature>
<feature type="binding site" evidence="1">
    <location>
        <position position="112"/>
    </location>
    <ligand>
        <name>[4Fe-4S] cluster</name>
        <dbReference type="ChEBI" id="CHEBI:49883"/>
        <label>1</label>
    </ligand>
</feature>
<protein>
    <recommendedName>
        <fullName evidence="1">NADH-quinone oxidoreductase subunit I</fullName>
        <ecNumber evidence="1">7.1.1.-</ecNumber>
    </recommendedName>
    <alternativeName>
        <fullName evidence="1">NADH dehydrogenase I subunit I</fullName>
    </alternativeName>
    <alternativeName>
        <fullName evidence="1">NDH-1 subunit I</fullName>
    </alternativeName>
</protein>
<dbReference type="EC" id="7.1.1.-" evidence="1"/>
<dbReference type="EMBL" id="AP007255">
    <property type="protein sequence ID" value="BAE51583.1"/>
    <property type="molecule type" value="Genomic_DNA"/>
</dbReference>
<dbReference type="RefSeq" id="WP_008617495.1">
    <property type="nucleotide sequence ID" value="NC_007626.1"/>
</dbReference>
<dbReference type="SMR" id="Q2W3J2"/>
<dbReference type="STRING" id="342108.amb2779"/>
<dbReference type="KEGG" id="mag:amb2779"/>
<dbReference type="HOGENOM" id="CLU_067218_5_1_5"/>
<dbReference type="OrthoDB" id="9808559at2"/>
<dbReference type="Proteomes" id="UP000007058">
    <property type="component" value="Chromosome"/>
</dbReference>
<dbReference type="GO" id="GO:0005886">
    <property type="term" value="C:plasma membrane"/>
    <property type="evidence" value="ECO:0007669"/>
    <property type="project" value="UniProtKB-SubCell"/>
</dbReference>
<dbReference type="GO" id="GO:0051539">
    <property type="term" value="F:4 iron, 4 sulfur cluster binding"/>
    <property type="evidence" value="ECO:0007669"/>
    <property type="project" value="UniProtKB-KW"/>
</dbReference>
<dbReference type="GO" id="GO:0005506">
    <property type="term" value="F:iron ion binding"/>
    <property type="evidence" value="ECO:0007669"/>
    <property type="project" value="UniProtKB-UniRule"/>
</dbReference>
<dbReference type="GO" id="GO:0050136">
    <property type="term" value="F:NADH:ubiquinone reductase (non-electrogenic) activity"/>
    <property type="evidence" value="ECO:0007669"/>
    <property type="project" value="UniProtKB-UniRule"/>
</dbReference>
<dbReference type="GO" id="GO:0048038">
    <property type="term" value="F:quinone binding"/>
    <property type="evidence" value="ECO:0007669"/>
    <property type="project" value="UniProtKB-KW"/>
</dbReference>
<dbReference type="GO" id="GO:0009060">
    <property type="term" value="P:aerobic respiration"/>
    <property type="evidence" value="ECO:0007669"/>
    <property type="project" value="TreeGrafter"/>
</dbReference>
<dbReference type="FunFam" id="3.30.70.3270:FF:000001">
    <property type="entry name" value="NADH-quinone oxidoreductase subunit I 1"/>
    <property type="match status" value="1"/>
</dbReference>
<dbReference type="Gene3D" id="3.30.70.3270">
    <property type="match status" value="1"/>
</dbReference>
<dbReference type="HAMAP" id="MF_01351">
    <property type="entry name" value="NDH1_NuoI"/>
    <property type="match status" value="1"/>
</dbReference>
<dbReference type="InterPro" id="IPR017896">
    <property type="entry name" value="4Fe4S_Fe-S-bd"/>
</dbReference>
<dbReference type="InterPro" id="IPR017900">
    <property type="entry name" value="4Fe4S_Fe_S_CS"/>
</dbReference>
<dbReference type="InterPro" id="IPR010226">
    <property type="entry name" value="NADH_quinone_OxRdtase_chainI"/>
</dbReference>
<dbReference type="NCBIfam" id="TIGR01971">
    <property type="entry name" value="NuoI"/>
    <property type="match status" value="1"/>
</dbReference>
<dbReference type="NCBIfam" id="NF004538">
    <property type="entry name" value="PRK05888.1-4"/>
    <property type="match status" value="1"/>
</dbReference>
<dbReference type="NCBIfam" id="NF004539">
    <property type="entry name" value="PRK05888.1-5"/>
    <property type="match status" value="1"/>
</dbReference>
<dbReference type="PANTHER" id="PTHR10849:SF20">
    <property type="entry name" value="NADH DEHYDROGENASE [UBIQUINONE] IRON-SULFUR PROTEIN 8, MITOCHONDRIAL"/>
    <property type="match status" value="1"/>
</dbReference>
<dbReference type="PANTHER" id="PTHR10849">
    <property type="entry name" value="NADH DEHYDROGENASE UBIQUINONE IRON-SULFUR PROTEIN 8, MITOCHONDRIAL"/>
    <property type="match status" value="1"/>
</dbReference>
<dbReference type="Pfam" id="PF12838">
    <property type="entry name" value="Fer4_7"/>
    <property type="match status" value="1"/>
</dbReference>
<dbReference type="SUPFAM" id="SSF54862">
    <property type="entry name" value="4Fe-4S ferredoxins"/>
    <property type="match status" value="1"/>
</dbReference>
<dbReference type="PROSITE" id="PS00198">
    <property type="entry name" value="4FE4S_FER_1"/>
    <property type="match status" value="2"/>
</dbReference>
<dbReference type="PROSITE" id="PS51379">
    <property type="entry name" value="4FE4S_FER_2"/>
    <property type="match status" value="2"/>
</dbReference>
<proteinExistence type="inferred from homology"/>
<keyword id="KW-0004">4Fe-4S</keyword>
<keyword id="KW-0997">Cell inner membrane</keyword>
<keyword id="KW-1003">Cell membrane</keyword>
<keyword id="KW-0408">Iron</keyword>
<keyword id="KW-0411">Iron-sulfur</keyword>
<keyword id="KW-0472">Membrane</keyword>
<keyword id="KW-0479">Metal-binding</keyword>
<keyword id="KW-0520">NAD</keyword>
<keyword id="KW-0874">Quinone</keyword>
<keyword id="KW-0677">Repeat</keyword>
<keyword id="KW-1278">Translocase</keyword>
<keyword id="KW-0830">Ubiquinone</keyword>
<evidence type="ECO:0000255" key="1">
    <source>
        <dbReference type="HAMAP-Rule" id="MF_01351"/>
    </source>
</evidence>
<reference key="1">
    <citation type="journal article" date="2005" name="DNA Res.">
        <title>Complete genome sequence of the facultative anaerobic magnetotactic bacterium Magnetospirillum sp. strain AMB-1.</title>
        <authorList>
            <person name="Matsunaga T."/>
            <person name="Okamura Y."/>
            <person name="Fukuda Y."/>
            <person name="Wahyudi A.T."/>
            <person name="Murase Y."/>
            <person name="Takeyama H."/>
        </authorList>
    </citation>
    <scope>NUCLEOTIDE SEQUENCE [LARGE SCALE GENOMIC DNA]</scope>
    <source>
        <strain>ATCC 700264 / AMB-1</strain>
    </source>
</reference>
<name>NUOI_PARM1</name>
<comment type="function">
    <text evidence="1">NDH-1 shuttles electrons from NADH, via FMN and iron-sulfur (Fe-S) centers, to quinones in the respiratory chain. The immediate electron acceptor for the enzyme in this species is believed to be ubiquinone. Couples the redox reaction to proton translocation (for every two electrons transferred, four hydrogen ions are translocated across the cytoplasmic membrane), and thus conserves the redox energy in a proton gradient.</text>
</comment>
<comment type="catalytic activity">
    <reaction evidence="1">
        <text>a quinone + NADH + 5 H(+)(in) = a quinol + NAD(+) + 4 H(+)(out)</text>
        <dbReference type="Rhea" id="RHEA:57888"/>
        <dbReference type="ChEBI" id="CHEBI:15378"/>
        <dbReference type="ChEBI" id="CHEBI:24646"/>
        <dbReference type="ChEBI" id="CHEBI:57540"/>
        <dbReference type="ChEBI" id="CHEBI:57945"/>
        <dbReference type="ChEBI" id="CHEBI:132124"/>
    </reaction>
</comment>
<comment type="cofactor">
    <cofactor evidence="1">
        <name>[4Fe-4S] cluster</name>
        <dbReference type="ChEBI" id="CHEBI:49883"/>
    </cofactor>
    <text evidence="1">Binds 2 [4Fe-4S] clusters per subunit.</text>
</comment>
<comment type="subunit">
    <text evidence="1">NDH-1 is composed of 14 different subunits. Subunits NuoA, H, J, K, L, M, N constitute the membrane sector of the complex.</text>
</comment>
<comment type="subcellular location">
    <subcellularLocation>
        <location evidence="1">Cell inner membrane</location>
        <topology evidence="1">Peripheral membrane protein</topology>
    </subcellularLocation>
</comment>
<comment type="similarity">
    <text evidence="1">Belongs to the complex I 23 kDa subunit family.</text>
</comment>
<organism>
    <name type="scientific">Paramagnetospirillum magneticum (strain ATCC 700264 / AMB-1)</name>
    <name type="common">Magnetospirillum magneticum</name>
    <dbReference type="NCBI Taxonomy" id="342108"/>
    <lineage>
        <taxon>Bacteria</taxon>
        <taxon>Pseudomonadati</taxon>
        <taxon>Pseudomonadota</taxon>
        <taxon>Alphaproteobacteria</taxon>
        <taxon>Rhodospirillales</taxon>
        <taxon>Magnetospirillaceae</taxon>
        <taxon>Paramagnetospirillum</taxon>
    </lineage>
</organism>
<accession>Q2W3J2</accession>